<gene>
    <name type="primary">dapG</name>
    <name type="synonym">lssD</name>
    <name type="ordered locus">BSU16760</name>
</gene>
<keyword id="KW-0024">Alternative initiation</keyword>
<keyword id="KW-0028">Amino-acid biosynthesis</keyword>
<keyword id="KW-0067">ATP-binding</keyword>
<keyword id="KW-0220">Diaminopimelate biosynthesis</keyword>
<keyword id="KW-0418">Kinase</keyword>
<keyword id="KW-0457">Lysine biosynthesis</keyword>
<keyword id="KW-0547">Nucleotide-binding</keyword>
<keyword id="KW-1185">Reference proteome</keyword>
<keyword id="KW-0808">Transferase</keyword>
<protein>
    <recommendedName>
        <fullName>Aspartokinase 1</fullName>
        <ecNumber>2.7.2.4</ecNumber>
    </recommendedName>
    <alternativeName>
        <fullName>Aspartate kinase 1</fullName>
    </alternativeName>
    <alternativeName>
        <fullName>Aspartokinase I</fullName>
    </alternativeName>
</protein>
<organism>
    <name type="scientific">Bacillus subtilis (strain 168)</name>
    <dbReference type="NCBI Taxonomy" id="224308"/>
    <lineage>
        <taxon>Bacteria</taxon>
        <taxon>Bacillati</taxon>
        <taxon>Bacillota</taxon>
        <taxon>Bacilli</taxon>
        <taxon>Bacillales</taxon>
        <taxon>Bacillaceae</taxon>
        <taxon>Bacillus</taxon>
    </lineage>
</organism>
<comment type="function">
    <text evidence="1">Catalyzes the phosphorylation of the beta-carboxyl group of aspartic acid with ATP to yield 4-phospho-L-aspartate, which is involved in the branched biosynthetic pathway leading to the biosynthesis of amino acids threonine, isoleucine and methionine.</text>
</comment>
<comment type="catalytic activity">
    <reaction>
        <text>L-aspartate + ATP = 4-phospho-L-aspartate + ADP</text>
        <dbReference type="Rhea" id="RHEA:23776"/>
        <dbReference type="ChEBI" id="CHEBI:29991"/>
        <dbReference type="ChEBI" id="CHEBI:30616"/>
        <dbReference type="ChEBI" id="CHEBI:57535"/>
        <dbReference type="ChEBI" id="CHEBI:456216"/>
        <dbReference type="EC" id="2.7.2.4"/>
    </reaction>
</comment>
<comment type="activity regulation">
    <text>Diaminopimelate-sensitive.</text>
</comment>
<comment type="pathway">
    <text>Amino-acid biosynthesis; L-lysine biosynthesis via DAP pathway; (S)-tetrahydrodipicolinate from L-aspartate: step 1/4.</text>
</comment>
<comment type="pathway">
    <text>Amino-acid biosynthesis; L-methionine biosynthesis via de novo pathway; L-homoserine from L-aspartate: step 1/3.</text>
</comment>
<comment type="pathway">
    <text>Amino-acid biosynthesis; L-threonine biosynthesis; L-threonine from L-aspartate: step 1/5.</text>
</comment>
<comment type="subunit">
    <text evidence="1">Tetramer consisting of 2 isoforms Alpha (catalytic) and 2 isoforms Beta (function not known).</text>
</comment>
<comment type="alternative products">
    <event type="alternative initiation"/>
    <isoform>
        <id>Q04795-1</id>
        <name>Alpha</name>
        <name>Aspartokinase 1 subunit alpha</name>
        <sequence type="displayed"/>
    </isoform>
    <isoform>
        <id>Q04795-2</id>
        <name>Beta</name>
        <name>Aspartokinase 1 subunit beta</name>
        <sequence type="described" ref="VSP_018652 VSP_018985"/>
    </isoform>
</comment>
<comment type="similarity">
    <text evidence="3">Belongs to the aspartokinase family.</text>
</comment>
<feature type="chain" id="PRO_0000002367" description="Aspartokinase 1">
    <location>
        <begin position="1"/>
        <end position="404"/>
    </location>
</feature>
<feature type="domain" description="ACT" evidence="2">
    <location>
        <begin position="344"/>
        <end position="404"/>
    </location>
</feature>
<feature type="binding site" evidence="1">
    <location>
        <begin position="7"/>
        <end position="10"/>
    </location>
    <ligand>
        <name>ATP</name>
        <dbReference type="ChEBI" id="CHEBI:30616"/>
    </ligand>
</feature>
<feature type="binding site" evidence="1">
    <location>
        <begin position="25"/>
        <end position="30"/>
    </location>
    <ligand>
        <name>substrate</name>
    </ligand>
</feature>
<feature type="binding site" evidence="1">
    <location>
        <position position="41"/>
    </location>
    <ligand>
        <name>ATP</name>
        <dbReference type="ChEBI" id="CHEBI:30616"/>
    </ligand>
</feature>
<feature type="binding site" evidence="1">
    <location>
        <begin position="52"/>
        <end position="54"/>
    </location>
    <ligand>
        <name>substrate</name>
    </ligand>
</feature>
<feature type="binding site" evidence="1">
    <location>
        <position position="79"/>
    </location>
    <ligand>
        <name>substrate</name>
    </ligand>
</feature>
<feature type="binding site" evidence="1">
    <location>
        <begin position="130"/>
        <end position="131"/>
    </location>
    <ligand>
        <name>substrate</name>
    </ligand>
</feature>
<feature type="binding site" evidence="1">
    <location>
        <begin position="155"/>
        <end position="158"/>
    </location>
    <ligand>
        <name>substrate</name>
    </ligand>
</feature>
<feature type="binding site" evidence="1">
    <location>
        <position position="158"/>
    </location>
    <ligand>
        <name>substrate</name>
    </ligand>
</feature>
<feature type="binding site" evidence="1">
    <location>
        <begin position="178"/>
        <end position="179"/>
    </location>
    <ligand>
        <name>ATP</name>
        <dbReference type="ChEBI" id="CHEBI:30616"/>
    </ligand>
</feature>
<feature type="binding site" evidence="1">
    <location>
        <begin position="184"/>
        <end position="189"/>
    </location>
    <ligand>
        <name>ATP</name>
        <dbReference type="ChEBI" id="CHEBI:30616"/>
    </ligand>
</feature>
<feature type="binding site" evidence="1">
    <location>
        <begin position="299"/>
        <end position="301"/>
    </location>
    <ligand>
        <name>substrate</name>
    </ligand>
</feature>
<feature type="binding site" evidence="1">
    <location>
        <begin position="355"/>
        <end position="356"/>
    </location>
    <ligand>
        <name>substrate</name>
    </ligand>
</feature>
<feature type="binding site" evidence="1">
    <location>
        <begin position="369"/>
        <end position="370"/>
    </location>
    <ligand>
        <name>substrate</name>
    </ligand>
</feature>
<feature type="binding site" evidence="1">
    <location>
        <begin position="376"/>
        <end position="377"/>
    </location>
    <ligand>
        <name>substrate</name>
    </ligand>
</feature>
<feature type="site" description="Contribution to the catalysis" evidence="1">
    <location>
        <position position="7"/>
    </location>
</feature>
<feature type="site" description="Contribution to the catalysis" evidence="1">
    <location>
        <position position="79"/>
    </location>
</feature>
<feature type="splice variant" id="VSP_018652" description="In isoform Beta." evidence="3">
    <location>
        <begin position="1"/>
        <end position="244"/>
    </location>
</feature>
<feature type="splice variant" id="VSP_018985" description="In isoform Beta." evidence="3">
    <original>V</original>
    <variation>M</variation>
    <location>
        <position position="245"/>
    </location>
</feature>
<dbReference type="EC" id="2.7.2.4"/>
<dbReference type="EMBL" id="L08471">
    <property type="protein sequence ID" value="AAA22384.1"/>
    <property type="molecule type" value="Genomic_DNA"/>
</dbReference>
<dbReference type="EMBL" id="AL009126">
    <property type="protein sequence ID" value="CAB13549.2"/>
    <property type="molecule type" value="Genomic_DNA"/>
</dbReference>
<dbReference type="PIR" id="C46665">
    <property type="entry name" value="C46665"/>
</dbReference>
<dbReference type="RefSeq" id="NP_389558.2">
    <molecule id="Q04795-1"/>
    <property type="nucleotide sequence ID" value="NC_000964.3"/>
</dbReference>
<dbReference type="RefSeq" id="WP_003245524.1">
    <property type="nucleotide sequence ID" value="NZ_OZ025638.1"/>
</dbReference>
<dbReference type="SMR" id="Q04795"/>
<dbReference type="FunCoup" id="Q04795">
    <property type="interactions" value="379"/>
</dbReference>
<dbReference type="IntAct" id="Q04795">
    <property type="interactions" value="1"/>
</dbReference>
<dbReference type="MINT" id="Q04795"/>
<dbReference type="STRING" id="224308.BSU16760"/>
<dbReference type="jPOST" id="Q04795"/>
<dbReference type="PaxDb" id="224308-BSU16760"/>
<dbReference type="EnsemblBacteria" id="CAB13549">
    <property type="protein sequence ID" value="CAB13549"/>
    <property type="gene ID" value="BSU_16760"/>
</dbReference>
<dbReference type="GeneID" id="936710"/>
<dbReference type="KEGG" id="bsu:BSU16760"/>
<dbReference type="PATRIC" id="fig|224308.179.peg.1818"/>
<dbReference type="eggNOG" id="COG0527">
    <property type="taxonomic scope" value="Bacteria"/>
</dbReference>
<dbReference type="InParanoid" id="Q04795"/>
<dbReference type="OrthoDB" id="9799110at2"/>
<dbReference type="PhylomeDB" id="Q04795"/>
<dbReference type="BioCyc" id="BSUB:BSU16760-MONOMER"/>
<dbReference type="BioCyc" id="MetaCyc:BSU16760-MONOMER"/>
<dbReference type="UniPathway" id="UPA00034">
    <property type="reaction ID" value="UER00015"/>
</dbReference>
<dbReference type="UniPathway" id="UPA00050">
    <property type="reaction ID" value="UER00461"/>
</dbReference>
<dbReference type="UniPathway" id="UPA00051">
    <property type="reaction ID" value="UER00462"/>
</dbReference>
<dbReference type="Proteomes" id="UP000001570">
    <property type="component" value="Chromosome"/>
</dbReference>
<dbReference type="GO" id="GO:0005829">
    <property type="term" value="C:cytosol"/>
    <property type="evidence" value="ECO:0000318"/>
    <property type="project" value="GO_Central"/>
</dbReference>
<dbReference type="GO" id="GO:0004072">
    <property type="term" value="F:aspartate kinase activity"/>
    <property type="evidence" value="ECO:0000318"/>
    <property type="project" value="GO_Central"/>
</dbReference>
<dbReference type="GO" id="GO:0005524">
    <property type="term" value="F:ATP binding"/>
    <property type="evidence" value="ECO:0007669"/>
    <property type="project" value="UniProtKB-KW"/>
</dbReference>
<dbReference type="GO" id="GO:0019877">
    <property type="term" value="P:diaminopimelate biosynthetic process"/>
    <property type="evidence" value="ECO:0007669"/>
    <property type="project" value="UniProtKB-KW"/>
</dbReference>
<dbReference type="GO" id="GO:0009090">
    <property type="term" value="P:homoserine biosynthetic process"/>
    <property type="evidence" value="ECO:0000318"/>
    <property type="project" value="GO_Central"/>
</dbReference>
<dbReference type="GO" id="GO:0009089">
    <property type="term" value="P:lysine biosynthetic process via diaminopimelate"/>
    <property type="evidence" value="ECO:0000318"/>
    <property type="project" value="GO_Central"/>
</dbReference>
<dbReference type="GO" id="GO:0009088">
    <property type="term" value="P:threonine biosynthetic process"/>
    <property type="evidence" value="ECO:0007669"/>
    <property type="project" value="UniProtKB-UniPathway"/>
</dbReference>
<dbReference type="CDD" id="cd04914">
    <property type="entry name" value="ACT_AKi-DapG-BS_1"/>
    <property type="match status" value="1"/>
</dbReference>
<dbReference type="CDD" id="cd04937">
    <property type="entry name" value="ACT_AKi-DapG-BS_2"/>
    <property type="match status" value="1"/>
</dbReference>
<dbReference type="FunFam" id="3.30.2130.10:FF:000005">
    <property type="entry name" value="Aspartokinase"/>
    <property type="match status" value="1"/>
</dbReference>
<dbReference type="FunFam" id="3.40.1160.10:FF:000002">
    <property type="entry name" value="Aspartokinase"/>
    <property type="match status" value="1"/>
</dbReference>
<dbReference type="Gene3D" id="3.40.1160.10">
    <property type="entry name" value="Acetylglutamate kinase-like"/>
    <property type="match status" value="1"/>
</dbReference>
<dbReference type="Gene3D" id="3.30.2130.10">
    <property type="entry name" value="VC0802-like"/>
    <property type="match status" value="1"/>
</dbReference>
<dbReference type="InterPro" id="IPR036393">
    <property type="entry name" value="AceGlu_kinase-like_sf"/>
</dbReference>
<dbReference type="InterPro" id="IPR045865">
    <property type="entry name" value="ACT-like_dom_sf"/>
</dbReference>
<dbReference type="InterPro" id="IPR002912">
    <property type="entry name" value="ACT_dom"/>
</dbReference>
<dbReference type="InterPro" id="IPR001048">
    <property type="entry name" value="Asp/Glu/Uridylate_kinase"/>
</dbReference>
<dbReference type="InterPro" id="IPR005260">
    <property type="entry name" value="Asp_kin_monofn"/>
</dbReference>
<dbReference type="InterPro" id="IPR001341">
    <property type="entry name" value="Asp_kinase"/>
</dbReference>
<dbReference type="InterPro" id="IPR018042">
    <property type="entry name" value="Aspartate_kinase_CS"/>
</dbReference>
<dbReference type="InterPro" id="IPR027795">
    <property type="entry name" value="CASTOR_ACT_dom"/>
</dbReference>
<dbReference type="NCBIfam" id="TIGR00656">
    <property type="entry name" value="asp_kin_monofn"/>
    <property type="match status" value="1"/>
</dbReference>
<dbReference type="NCBIfam" id="TIGR00657">
    <property type="entry name" value="asp_kinases"/>
    <property type="match status" value="1"/>
</dbReference>
<dbReference type="NCBIfam" id="NF006068">
    <property type="entry name" value="PRK08210.1"/>
    <property type="match status" value="1"/>
</dbReference>
<dbReference type="PANTHER" id="PTHR21499">
    <property type="entry name" value="ASPARTATE KINASE"/>
    <property type="match status" value="1"/>
</dbReference>
<dbReference type="PANTHER" id="PTHR21499:SF3">
    <property type="entry name" value="ASPARTOKINASE"/>
    <property type="match status" value="1"/>
</dbReference>
<dbReference type="Pfam" id="PF00696">
    <property type="entry name" value="AA_kinase"/>
    <property type="match status" value="1"/>
</dbReference>
<dbReference type="Pfam" id="PF13840">
    <property type="entry name" value="ACT_7"/>
    <property type="match status" value="1"/>
</dbReference>
<dbReference type="PIRSF" id="PIRSF000726">
    <property type="entry name" value="Asp_kin"/>
    <property type="match status" value="1"/>
</dbReference>
<dbReference type="SUPFAM" id="SSF55021">
    <property type="entry name" value="ACT-like"/>
    <property type="match status" value="2"/>
</dbReference>
<dbReference type="SUPFAM" id="SSF53633">
    <property type="entry name" value="Carbamate kinase-like"/>
    <property type="match status" value="1"/>
</dbReference>
<dbReference type="PROSITE" id="PS51671">
    <property type="entry name" value="ACT"/>
    <property type="match status" value="1"/>
</dbReference>
<dbReference type="PROSITE" id="PS00324">
    <property type="entry name" value="ASPARTOKINASE"/>
    <property type="match status" value="1"/>
</dbReference>
<evidence type="ECO:0000250" key="1"/>
<evidence type="ECO:0000255" key="2">
    <source>
        <dbReference type="PROSITE-ProRule" id="PRU01007"/>
    </source>
</evidence>
<evidence type="ECO:0000305" key="3"/>
<reference key="1">
    <citation type="journal article" date="1993" name="J. Biol. Chem.">
        <title>Organization and nucleotide sequence of the Bacillus subtilis diaminopimelate operon, a cluster of genes encoding the first three enzymes of diaminopimelate synthesis and dipicolinate synthase.</title>
        <authorList>
            <person name="Chen N.-Y."/>
            <person name="Jiang S.-Q."/>
            <person name="Klein D.A."/>
            <person name="Paulus H."/>
        </authorList>
    </citation>
    <scope>NUCLEOTIDE SEQUENCE [GENOMIC DNA]</scope>
    <source>
        <strain>168</strain>
    </source>
</reference>
<reference key="2">
    <citation type="journal article" date="1997" name="Nature">
        <title>The complete genome sequence of the Gram-positive bacterium Bacillus subtilis.</title>
        <authorList>
            <person name="Kunst F."/>
            <person name="Ogasawara N."/>
            <person name="Moszer I."/>
            <person name="Albertini A.M."/>
            <person name="Alloni G."/>
            <person name="Azevedo V."/>
            <person name="Bertero M.G."/>
            <person name="Bessieres P."/>
            <person name="Bolotin A."/>
            <person name="Borchert S."/>
            <person name="Borriss R."/>
            <person name="Boursier L."/>
            <person name="Brans A."/>
            <person name="Braun M."/>
            <person name="Brignell S.C."/>
            <person name="Bron S."/>
            <person name="Brouillet S."/>
            <person name="Bruschi C.V."/>
            <person name="Caldwell B."/>
            <person name="Capuano V."/>
            <person name="Carter N.M."/>
            <person name="Choi S.-K."/>
            <person name="Codani J.-J."/>
            <person name="Connerton I.F."/>
            <person name="Cummings N.J."/>
            <person name="Daniel R.A."/>
            <person name="Denizot F."/>
            <person name="Devine K.M."/>
            <person name="Duesterhoeft A."/>
            <person name="Ehrlich S.D."/>
            <person name="Emmerson P.T."/>
            <person name="Entian K.-D."/>
            <person name="Errington J."/>
            <person name="Fabret C."/>
            <person name="Ferrari E."/>
            <person name="Foulger D."/>
            <person name="Fritz C."/>
            <person name="Fujita M."/>
            <person name="Fujita Y."/>
            <person name="Fuma S."/>
            <person name="Galizzi A."/>
            <person name="Galleron N."/>
            <person name="Ghim S.-Y."/>
            <person name="Glaser P."/>
            <person name="Goffeau A."/>
            <person name="Golightly E.J."/>
            <person name="Grandi G."/>
            <person name="Guiseppi G."/>
            <person name="Guy B.J."/>
            <person name="Haga K."/>
            <person name="Haiech J."/>
            <person name="Harwood C.R."/>
            <person name="Henaut A."/>
            <person name="Hilbert H."/>
            <person name="Holsappel S."/>
            <person name="Hosono S."/>
            <person name="Hullo M.-F."/>
            <person name="Itaya M."/>
            <person name="Jones L.-M."/>
            <person name="Joris B."/>
            <person name="Karamata D."/>
            <person name="Kasahara Y."/>
            <person name="Klaerr-Blanchard M."/>
            <person name="Klein C."/>
            <person name="Kobayashi Y."/>
            <person name="Koetter P."/>
            <person name="Koningstein G."/>
            <person name="Krogh S."/>
            <person name="Kumano M."/>
            <person name="Kurita K."/>
            <person name="Lapidus A."/>
            <person name="Lardinois S."/>
            <person name="Lauber J."/>
            <person name="Lazarevic V."/>
            <person name="Lee S.-M."/>
            <person name="Levine A."/>
            <person name="Liu H."/>
            <person name="Masuda S."/>
            <person name="Mauel C."/>
            <person name="Medigue C."/>
            <person name="Medina N."/>
            <person name="Mellado R.P."/>
            <person name="Mizuno M."/>
            <person name="Moestl D."/>
            <person name="Nakai S."/>
            <person name="Noback M."/>
            <person name="Noone D."/>
            <person name="O'Reilly M."/>
            <person name="Ogawa K."/>
            <person name="Ogiwara A."/>
            <person name="Oudega B."/>
            <person name="Park S.-H."/>
            <person name="Parro V."/>
            <person name="Pohl T.M."/>
            <person name="Portetelle D."/>
            <person name="Porwollik S."/>
            <person name="Prescott A.M."/>
            <person name="Presecan E."/>
            <person name="Pujic P."/>
            <person name="Purnelle B."/>
            <person name="Rapoport G."/>
            <person name="Rey M."/>
            <person name="Reynolds S."/>
            <person name="Rieger M."/>
            <person name="Rivolta C."/>
            <person name="Rocha E."/>
            <person name="Roche B."/>
            <person name="Rose M."/>
            <person name="Sadaie Y."/>
            <person name="Sato T."/>
            <person name="Scanlan E."/>
            <person name="Schleich S."/>
            <person name="Schroeter R."/>
            <person name="Scoffone F."/>
            <person name="Sekiguchi J."/>
            <person name="Sekowska A."/>
            <person name="Seror S.J."/>
            <person name="Serror P."/>
            <person name="Shin B.-S."/>
            <person name="Soldo B."/>
            <person name="Sorokin A."/>
            <person name="Tacconi E."/>
            <person name="Takagi T."/>
            <person name="Takahashi H."/>
            <person name="Takemaru K."/>
            <person name="Takeuchi M."/>
            <person name="Tamakoshi A."/>
            <person name="Tanaka T."/>
            <person name="Terpstra P."/>
            <person name="Tognoni A."/>
            <person name="Tosato V."/>
            <person name="Uchiyama S."/>
            <person name="Vandenbol M."/>
            <person name="Vannier F."/>
            <person name="Vassarotti A."/>
            <person name="Viari A."/>
            <person name="Wambutt R."/>
            <person name="Wedler E."/>
            <person name="Wedler H."/>
            <person name="Weitzenegger T."/>
            <person name="Winters P."/>
            <person name="Wipat A."/>
            <person name="Yamamoto H."/>
            <person name="Yamane K."/>
            <person name="Yasumoto K."/>
            <person name="Yata K."/>
            <person name="Yoshida K."/>
            <person name="Yoshikawa H.-F."/>
            <person name="Zumstein E."/>
            <person name="Yoshikawa H."/>
            <person name="Danchin A."/>
        </authorList>
    </citation>
    <scope>NUCLEOTIDE SEQUENCE [LARGE SCALE GENOMIC DNA]</scope>
    <source>
        <strain>168</strain>
    </source>
</reference>
<reference key="3">
    <citation type="journal article" date="2009" name="Microbiology">
        <title>From a consortium sequence to a unified sequence: the Bacillus subtilis 168 reference genome a decade later.</title>
        <authorList>
            <person name="Barbe V."/>
            <person name="Cruveiller S."/>
            <person name="Kunst F."/>
            <person name="Lenoble P."/>
            <person name="Meurice G."/>
            <person name="Sekowska A."/>
            <person name="Vallenet D."/>
            <person name="Wang T."/>
            <person name="Moszer I."/>
            <person name="Medigue C."/>
            <person name="Danchin A."/>
        </authorList>
    </citation>
    <scope>SEQUENCE REVISION TO 399</scope>
</reference>
<accession>Q04795</accession>
<accession>O31759</accession>
<sequence length="404" mass="42948">MKIIVQKFGGTSVKDDKGRKLALGHIKEAISEGYKVVVVVSAMGRKGDPYATDSLLGLLYGDQSAISPREQDLLLSCGETISSVVFTSMLLDNGVKAAALTGAQAGFLTNDQHTNAKIIEMKPERLFSVLANHDAVVVAGFQGATEKGDTTTIGRGGSDTSAAALGAAVDAEYIDIFTDVEGVMTADPRVVENAKPLPVVTYTEICNLAYQGAKVISPRAVEIAMQAKVPIRVRSTYSNDKGTLVTSHHSSKVGSDVFERLITGIAHVKDVTQFKVPAKIGQYNVQTEVFKAMANAGISVDFFNITPSEIVYTVAGNKTETAQRILMDMGYDPMVTRNCAKVSAVGAGIMGVPGVTSKIVSALSEKEIPILQSADSHTTIWVLVHEADMVPAVNALHEVFELSK</sequence>
<name>AK1_BACSU</name>
<proteinExistence type="inferred from homology"/>